<proteinExistence type="inferred from homology"/>
<accession>Q8Y7C6</accession>
<organism>
    <name type="scientific">Listeria monocytogenes serovar 1/2a (strain ATCC BAA-679 / EGD-e)</name>
    <dbReference type="NCBI Taxonomy" id="169963"/>
    <lineage>
        <taxon>Bacteria</taxon>
        <taxon>Bacillati</taxon>
        <taxon>Bacillota</taxon>
        <taxon>Bacilli</taxon>
        <taxon>Bacillales</taxon>
        <taxon>Listeriaceae</taxon>
        <taxon>Listeria</taxon>
    </lineage>
</organism>
<protein>
    <recommendedName>
        <fullName evidence="1">Transcription antitermination protein NusB</fullName>
    </recommendedName>
    <alternativeName>
        <fullName evidence="1">Antitermination factor NusB</fullName>
    </alternativeName>
</protein>
<name>NUSB_LISMO</name>
<gene>
    <name evidence="1" type="primary">nusB</name>
    <name type="ordered locus">lmo1359</name>
</gene>
<keyword id="KW-1185">Reference proteome</keyword>
<keyword id="KW-0694">RNA-binding</keyword>
<keyword id="KW-0804">Transcription</keyword>
<keyword id="KW-0889">Transcription antitermination</keyword>
<keyword id="KW-0805">Transcription regulation</keyword>
<sequence>MKRREAREKALQALFQIELNEMSLDQAIKNIMEDEQDDYMEKLVEGVMANKAEIDAIIEPNLDNWRMDRLSKVDLSLLRLSVYEIKYLDDVPNRVSLNESIEIAKIYSDEKSSKFINGVLANIAPEDK</sequence>
<comment type="function">
    <text evidence="1">Involved in transcription antitermination. Required for transcription of ribosomal RNA (rRNA) genes. Binds specifically to the boxA antiterminator sequence of the ribosomal RNA (rrn) operons.</text>
</comment>
<comment type="similarity">
    <text evidence="1">Belongs to the NusB family.</text>
</comment>
<feature type="chain" id="PRO_0000176554" description="Transcription antitermination protein NusB">
    <location>
        <begin position="1"/>
        <end position="128"/>
    </location>
</feature>
<reference key="1">
    <citation type="journal article" date="2001" name="Science">
        <title>Comparative genomics of Listeria species.</title>
        <authorList>
            <person name="Glaser P."/>
            <person name="Frangeul L."/>
            <person name="Buchrieser C."/>
            <person name="Rusniok C."/>
            <person name="Amend A."/>
            <person name="Baquero F."/>
            <person name="Berche P."/>
            <person name="Bloecker H."/>
            <person name="Brandt P."/>
            <person name="Chakraborty T."/>
            <person name="Charbit A."/>
            <person name="Chetouani F."/>
            <person name="Couve E."/>
            <person name="de Daruvar A."/>
            <person name="Dehoux P."/>
            <person name="Domann E."/>
            <person name="Dominguez-Bernal G."/>
            <person name="Duchaud E."/>
            <person name="Durant L."/>
            <person name="Dussurget O."/>
            <person name="Entian K.-D."/>
            <person name="Fsihi H."/>
            <person name="Garcia-del Portillo F."/>
            <person name="Garrido P."/>
            <person name="Gautier L."/>
            <person name="Goebel W."/>
            <person name="Gomez-Lopez N."/>
            <person name="Hain T."/>
            <person name="Hauf J."/>
            <person name="Jackson D."/>
            <person name="Jones L.-M."/>
            <person name="Kaerst U."/>
            <person name="Kreft J."/>
            <person name="Kuhn M."/>
            <person name="Kunst F."/>
            <person name="Kurapkat G."/>
            <person name="Madueno E."/>
            <person name="Maitournam A."/>
            <person name="Mata Vicente J."/>
            <person name="Ng E."/>
            <person name="Nedjari H."/>
            <person name="Nordsiek G."/>
            <person name="Novella S."/>
            <person name="de Pablos B."/>
            <person name="Perez-Diaz J.-C."/>
            <person name="Purcell R."/>
            <person name="Remmel B."/>
            <person name="Rose M."/>
            <person name="Schlueter T."/>
            <person name="Simoes N."/>
            <person name="Tierrez A."/>
            <person name="Vazquez-Boland J.-A."/>
            <person name="Voss H."/>
            <person name="Wehland J."/>
            <person name="Cossart P."/>
        </authorList>
    </citation>
    <scope>NUCLEOTIDE SEQUENCE [LARGE SCALE GENOMIC DNA]</scope>
    <source>
        <strain>ATCC BAA-679 / EGD-e</strain>
    </source>
</reference>
<dbReference type="EMBL" id="AL591978">
    <property type="protein sequence ID" value="CAC99437.1"/>
    <property type="molecule type" value="Genomic_DNA"/>
</dbReference>
<dbReference type="PIR" id="AG1244">
    <property type="entry name" value="AG1244"/>
</dbReference>
<dbReference type="RefSeq" id="NP_464884.1">
    <property type="nucleotide sequence ID" value="NC_003210.1"/>
</dbReference>
<dbReference type="RefSeq" id="WP_003722486.1">
    <property type="nucleotide sequence ID" value="NZ_CP149495.1"/>
</dbReference>
<dbReference type="SMR" id="Q8Y7C6"/>
<dbReference type="STRING" id="169963.gene:17594016"/>
<dbReference type="PaxDb" id="169963-lmo1359"/>
<dbReference type="EnsemblBacteria" id="CAC99437">
    <property type="protein sequence ID" value="CAC99437"/>
    <property type="gene ID" value="CAC99437"/>
</dbReference>
<dbReference type="GeneID" id="93239235"/>
<dbReference type="GeneID" id="987880"/>
<dbReference type="KEGG" id="lmo:lmo1359"/>
<dbReference type="PATRIC" id="fig|169963.11.peg.1396"/>
<dbReference type="eggNOG" id="COG0781">
    <property type="taxonomic scope" value="Bacteria"/>
</dbReference>
<dbReference type="HOGENOM" id="CLU_087843_3_1_9"/>
<dbReference type="OrthoDB" id="9811381at2"/>
<dbReference type="PhylomeDB" id="Q8Y7C6"/>
<dbReference type="BioCyc" id="LMON169963:LMO1359-MONOMER"/>
<dbReference type="Proteomes" id="UP000000817">
    <property type="component" value="Chromosome"/>
</dbReference>
<dbReference type="GO" id="GO:0005829">
    <property type="term" value="C:cytosol"/>
    <property type="evidence" value="ECO:0000318"/>
    <property type="project" value="GO_Central"/>
</dbReference>
<dbReference type="GO" id="GO:0003723">
    <property type="term" value="F:RNA binding"/>
    <property type="evidence" value="ECO:0007669"/>
    <property type="project" value="UniProtKB-UniRule"/>
</dbReference>
<dbReference type="GO" id="GO:0006353">
    <property type="term" value="P:DNA-templated transcription termination"/>
    <property type="evidence" value="ECO:0007669"/>
    <property type="project" value="UniProtKB-UniRule"/>
</dbReference>
<dbReference type="GO" id="GO:0031564">
    <property type="term" value="P:transcription antitermination"/>
    <property type="evidence" value="ECO:0007669"/>
    <property type="project" value="UniProtKB-KW"/>
</dbReference>
<dbReference type="CDD" id="cd00619">
    <property type="entry name" value="Terminator_NusB"/>
    <property type="match status" value="1"/>
</dbReference>
<dbReference type="FunFam" id="1.10.940.10:FF:000003">
    <property type="entry name" value="Transcription antitermination factor NusB"/>
    <property type="match status" value="1"/>
</dbReference>
<dbReference type="Gene3D" id="1.10.940.10">
    <property type="entry name" value="NusB-like"/>
    <property type="match status" value="1"/>
</dbReference>
<dbReference type="HAMAP" id="MF_00073">
    <property type="entry name" value="NusB"/>
    <property type="match status" value="1"/>
</dbReference>
<dbReference type="InterPro" id="IPR035926">
    <property type="entry name" value="NusB-like_sf"/>
</dbReference>
<dbReference type="InterPro" id="IPR011605">
    <property type="entry name" value="NusB_fam"/>
</dbReference>
<dbReference type="InterPro" id="IPR006027">
    <property type="entry name" value="NusB_RsmB_TIM44"/>
</dbReference>
<dbReference type="NCBIfam" id="TIGR01951">
    <property type="entry name" value="nusB"/>
    <property type="match status" value="1"/>
</dbReference>
<dbReference type="NCBIfam" id="NF001223">
    <property type="entry name" value="PRK00202.1-1"/>
    <property type="match status" value="1"/>
</dbReference>
<dbReference type="PANTHER" id="PTHR11078:SF3">
    <property type="entry name" value="ANTITERMINATION NUSB DOMAIN-CONTAINING PROTEIN"/>
    <property type="match status" value="1"/>
</dbReference>
<dbReference type="PANTHER" id="PTHR11078">
    <property type="entry name" value="N UTILIZATION SUBSTANCE PROTEIN B-RELATED"/>
    <property type="match status" value="1"/>
</dbReference>
<dbReference type="Pfam" id="PF01029">
    <property type="entry name" value="NusB"/>
    <property type="match status" value="1"/>
</dbReference>
<dbReference type="SUPFAM" id="SSF48013">
    <property type="entry name" value="NusB-like"/>
    <property type="match status" value="1"/>
</dbReference>
<evidence type="ECO:0000255" key="1">
    <source>
        <dbReference type="HAMAP-Rule" id="MF_00073"/>
    </source>
</evidence>